<evidence type="ECO:0000255" key="1">
    <source>
        <dbReference type="PROSITE-ProRule" id="PRU00057"/>
    </source>
</evidence>
<evidence type="ECO:0000255" key="2">
    <source>
        <dbReference type="PROSITE-ProRule" id="PRU00145"/>
    </source>
</evidence>
<evidence type="ECO:0000255" key="3">
    <source>
        <dbReference type="PROSITE-ProRule" id="PRU00159"/>
    </source>
</evidence>
<evidence type="ECO:0000255" key="4">
    <source>
        <dbReference type="PROSITE-ProRule" id="PRU10027"/>
    </source>
</evidence>
<evidence type="ECO:0000256" key="5">
    <source>
        <dbReference type="SAM" id="MobiDB-lite"/>
    </source>
</evidence>
<evidence type="ECO:0000269" key="6">
    <source>
    </source>
</evidence>
<evidence type="ECO:0000305" key="7"/>
<organism>
    <name type="scientific">Saccharomyces cerevisiae (strain ATCC 204508 / S288c)</name>
    <name type="common">Baker's yeast</name>
    <dbReference type="NCBI Taxonomy" id="559292"/>
    <lineage>
        <taxon>Eukaryota</taxon>
        <taxon>Fungi</taxon>
        <taxon>Dikarya</taxon>
        <taxon>Ascomycota</taxon>
        <taxon>Saccharomycotina</taxon>
        <taxon>Saccharomycetes</taxon>
        <taxon>Saccharomycetales</taxon>
        <taxon>Saccharomycetaceae</taxon>
        <taxon>Saccharomyces</taxon>
    </lineage>
</organism>
<protein>
    <recommendedName>
        <fullName>Serine/threonine-protein kinase SKM1</fullName>
        <ecNumber>2.7.11.1</ecNumber>
    </recommendedName>
    <alternativeName>
        <fullName>Protein kinase 75490 D</fullName>
    </alternativeName>
</protein>
<accession>Q12469</accession>
<accession>D6W1V4</accession>
<accession>E9P934</accession>
<accession>Q06940</accession>
<proteinExistence type="evidence at protein level"/>
<gene>
    <name type="primary">SKM1</name>
    <name type="ordered locus">YOL113W</name>
    <name type="ORF">HRA655</name>
</gene>
<feature type="chain" id="PRO_0000086656" description="Serine/threonine-protein kinase SKM1">
    <location>
        <begin position="1"/>
        <end position="655"/>
    </location>
</feature>
<feature type="domain" description="PH" evidence="2">
    <location>
        <begin position="3"/>
        <end position="118"/>
    </location>
</feature>
<feature type="domain" description="CRIB" evidence="1">
    <location>
        <begin position="123"/>
        <end position="136"/>
    </location>
</feature>
<feature type="domain" description="Protein kinase" evidence="3">
    <location>
        <begin position="360"/>
        <end position="639"/>
    </location>
</feature>
<feature type="region of interest" description="Disordered" evidence="5">
    <location>
        <begin position="265"/>
        <end position="327"/>
    </location>
</feature>
<feature type="compositionally biased region" description="Basic and acidic residues" evidence="5">
    <location>
        <begin position="265"/>
        <end position="276"/>
    </location>
</feature>
<feature type="compositionally biased region" description="Basic and acidic residues" evidence="5">
    <location>
        <begin position="318"/>
        <end position="327"/>
    </location>
</feature>
<feature type="active site" description="Proton acceptor" evidence="3 4">
    <location>
        <position position="507"/>
    </location>
</feature>
<feature type="binding site" evidence="3">
    <location>
        <begin position="366"/>
        <end position="374"/>
    </location>
    <ligand>
        <name>ATP</name>
        <dbReference type="ChEBI" id="CHEBI:30616"/>
    </ligand>
</feature>
<feature type="binding site" evidence="3">
    <location>
        <position position="406"/>
    </location>
    <ligand>
        <name>ATP</name>
        <dbReference type="ChEBI" id="CHEBI:30616"/>
    </ligand>
</feature>
<feature type="sequence conflict" description="In Ref. 5; AAT93238." evidence="7" ref="5">
    <original>S</original>
    <variation>R</variation>
    <location>
        <position position="150"/>
    </location>
</feature>
<feature type="sequence conflict" description="In Ref. 1; CAA49163." evidence="7" ref="1">
    <original>S</original>
    <variation>A</variation>
    <location>
        <position position="303"/>
    </location>
</feature>
<feature type="sequence conflict" description="In Ref. 1; CAA49163." evidence="7" ref="1">
    <original>R</original>
    <variation>K</variation>
    <location>
        <position position="306"/>
    </location>
</feature>
<feature type="sequence conflict" description="In Ref. 1." evidence="7" ref="1">
    <original>H</original>
    <variation>Y</variation>
    <location>
        <position position="320"/>
    </location>
</feature>
<feature type="sequence conflict" description="In Ref. 1." evidence="7" ref="1">
    <original>S</original>
    <variation>R</variation>
    <location>
        <position position="322"/>
    </location>
</feature>
<feature type="sequence conflict" description="In Ref. 1; CAA49163." evidence="7" ref="1">
    <original>M</original>
    <variation>T</variation>
    <location>
        <position position="452"/>
    </location>
</feature>
<feature type="sequence conflict" description="In Ref. 1; CAA49163." evidence="7" ref="1">
    <original>A</original>
    <variation>V</variation>
    <location>
        <position position="468"/>
    </location>
</feature>
<name>SKM1_YEAST</name>
<dbReference type="EC" id="2.7.11.1"/>
<dbReference type="EMBL" id="X69322">
    <property type="protein sequence ID" value="CAA49163.1"/>
    <property type="molecule type" value="Genomic_DNA"/>
</dbReference>
<dbReference type="EMBL" id="Z48149">
    <property type="protein sequence ID" value="CAA88147.1"/>
    <property type="molecule type" value="Genomic_DNA"/>
</dbReference>
<dbReference type="EMBL" id="Z74855">
    <property type="protein sequence ID" value="CAA99132.1"/>
    <property type="molecule type" value="Genomic_DNA"/>
</dbReference>
<dbReference type="EMBL" id="AY693219">
    <property type="protein sequence ID" value="AAT93238.1"/>
    <property type="molecule type" value="Genomic_DNA"/>
</dbReference>
<dbReference type="EMBL" id="BK006948">
    <property type="protein sequence ID" value="DAA10670.1"/>
    <property type="molecule type" value="Genomic_DNA"/>
</dbReference>
<dbReference type="PIR" id="S51884">
    <property type="entry name" value="S51884"/>
</dbReference>
<dbReference type="RefSeq" id="NP_014528.1">
    <property type="nucleotide sequence ID" value="NM_001183367.1"/>
</dbReference>
<dbReference type="SMR" id="Q12469"/>
<dbReference type="BioGRID" id="34287">
    <property type="interactions" value="138"/>
</dbReference>
<dbReference type="DIP" id="DIP-4217N"/>
<dbReference type="FunCoup" id="Q12469">
    <property type="interactions" value="284"/>
</dbReference>
<dbReference type="IntAct" id="Q12469">
    <property type="interactions" value="14"/>
</dbReference>
<dbReference type="MINT" id="Q12469"/>
<dbReference type="STRING" id="4932.YOL113W"/>
<dbReference type="iPTMnet" id="Q12469"/>
<dbReference type="PaxDb" id="4932-YOL113W"/>
<dbReference type="PeptideAtlas" id="Q12469"/>
<dbReference type="EnsemblFungi" id="YOL113W_mRNA">
    <property type="protein sequence ID" value="YOL113W"/>
    <property type="gene ID" value="YOL113W"/>
</dbReference>
<dbReference type="GeneID" id="854036"/>
<dbReference type="KEGG" id="sce:YOL113W"/>
<dbReference type="AGR" id="SGD:S000005473"/>
<dbReference type="SGD" id="S000005473">
    <property type="gene designation" value="SKM1"/>
</dbReference>
<dbReference type="VEuPathDB" id="FungiDB:YOL113W"/>
<dbReference type="eggNOG" id="KOG0578">
    <property type="taxonomic scope" value="Eukaryota"/>
</dbReference>
<dbReference type="GeneTree" id="ENSGT00940000176572"/>
<dbReference type="HOGENOM" id="CLU_000288_26_2_1"/>
<dbReference type="InParanoid" id="Q12469"/>
<dbReference type="OMA" id="VMMEYLA"/>
<dbReference type="OrthoDB" id="248923at2759"/>
<dbReference type="BioCyc" id="YEAST:G3O-33510-MONOMER"/>
<dbReference type="BRENDA" id="2.7.11.1">
    <property type="organism ID" value="984"/>
</dbReference>
<dbReference type="Reactome" id="R-SCE-389359">
    <property type="pathway name" value="CD28 dependent Vav1 pathway"/>
</dbReference>
<dbReference type="Reactome" id="R-SCE-5627123">
    <property type="pathway name" value="RHO GTPases activate PAKs"/>
</dbReference>
<dbReference type="Reactome" id="R-SCE-5687128">
    <property type="pathway name" value="MAPK6/MAPK4 signaling"/>
</dbReference>
<dbReference type="Reactome" id="R-SCE-9013405">
    <property type="pathway name" value="RHOD GTPase cycle"/>
</dbReference>
<dbReference type="Reactome" id="R-SCE-9013406">
    <property type="pathway name" value="RHOQ GTPase cycle"/>
</dbReference>
<dbReference type="Reactome" id="R-SCE-9013420">
    <property type="pathway name" value="RHOU GTPase cycle"/>
</dbReference>
<dbReference type="Reactome" id="R-SCE-9013424">
    <property type="pathway name" value="RHOV GTPase cycle"/>
</dbReference>
<dbReference type="BioGRID-ORCS" id="854036">
    <property type="hits" value="0 hits in 13 CRISPR screens"/>
</dbReference>
<dbReference type="PRO" id="PR:Q12469"/>
<dbReference type="Proteomes" id="UP000002311">
    <property type="component" value="Chromosome XV"/>
</dbReference>
<dbReference type="RNAct" id="Q12469">
    <property type="molecule type" value="protein"/>
</dbReference>
<dbReference type="GO" id="GO:0005737">
    <property type="term" value="C:cytoplasm"/>
    <property type="evidence" value="ECO:0000318"/>
    <property type="project" value="GO_Central"/>
</dbReference>
<dbReference type="GO" id="GO:0005634">
    <property type="term" value="C:nucleus"/>
    <property type="evidence" value="ECO:0000314"/>
    <property type="project" value="SGD"/>
</dbReference>
<dbReference type="GO" id="GO:0005886">
    <property type="term" value="C:plasma membrane"/>
    <property type="evidence" value="ECO:0000314"/>
    <property type="project" value="SGD"/>
</dbReference>
<dbReference type="GO" id="GO:0005524">
    <property type="term" value="F:ATP binding"/>
    <property type="evidence" value="ECO:0007669"/>
    <property type="project" value="UniProtKB-KW"/>
</dbReference>
<dbReference type="GO" id="GO:0004672">
    <property type="term" value="F:protein kinase activity"/>
    <property type="evidence" value="ECO:0007005"/>
    <property type="project" value="SGD"/>
</dbReference>
<dbReference type="GO" id="GO:0106310">
    <property type="term" value="F:protein serine kinase activity"/>
    <property type="evidence" value="ECO:0007669"/>
    <property type="project" value="RHEA"/>
</dbReference>
<dbReference type="GO" id="GO:0004674">
    <property type="term" value="F:protein serine/threonine kinase activity"/>
    <property type="evidence" value="ECO:0000250"/>
    <property type="project" value="SGD"/>
</dbReference>
<dbReference type="GO" id="GO:0009267">
    <property type="term" value="P:cellular response to starvation"/>
    <property type="evidence" value="ECO:0000318"/>
    <property type="project" value="GO_Central"/>
</dbReference>
<dbReference type="GO" id="GO:0035556">
    <property type="term" value="P:intracellular signal transduction"/>
    <property type="evidence" value="ECO:0000318"/>
    <property type="project" value="GO_Central"/>
</dbReference>
<dbReference type="GO" id="GO:0010629">
    <property type="term" value="P:negative regulation of gene expression"/>
    <property type="evidence" value="ECO:0000315"/>
    <property type="project" value="SGD"/>
</dbReference>
<dbReference type="GO" id="GO:2000910">
    <property type="term" value="P:negative regulation of sterol import"/>
    <property type="evidence" value="ECO:0000315"/>
    <property type="project" value="SGD"/>
</dbReference>
<dbReference type="GO" id="GO:0000122">
    <property type="term" value="P:negative regulation of transcription by RNA polymerase II"/>
    <property type="evidence" value="ECO:0000315"/>
    <property type="project" value="SGD"/>
</dbReference>
<dbReference type="GO" id="GO:0043408">
    <property type="term" value="P:regulation of MAPK cascade"/>
    <property type="evidence" value="ECO:0000318"/>
    <property type="project" value="GO_Central"/>
</dbReference>
<dbReference type="GO" id="GO:0000920">
    <property type="term" value="P:septum digestion after cytokinesis"/>
    <property type="evidence" value="ECO:0000315"/>
    <property type="project" value="SGD"/>
</dbReference>
<dbReference type="GO" id="GO:0035376">
    <property type="term" value="P:sterol import"/>
    <property type="evidence" value="ECO:0000315"/>
    <property type="project" value="SGD"/>
</dbReference>
<dbReference type="CDD" id="cd01093">
    <property type="entry name" value="CRIB_PAK_like"/>
    <property type="match status" value="1"/>
</dbReference>
<dbReference type="CDD" id="cd13279">
    <property type="entry name" value="PH_Cla4_Ste20"/>
    <property type="match status" value="1"/>
</dbReference>
<dbReference type="CDD" id="cd06614">
    <property type="entry name" value="STKc_PAK"/>
    <property type="match status" value="1"/>
</dbReference>
<dbReference type="FunFam" id="1.10.510.10:FF:000139">
    <property type="entry name" value="Non-specific serine/threonine protein kinase"/>
    <property type="match status" value="1"/>
</dbReference>
<dbReference type="FunFam" id="2.30.29.30:FF:000356">
    <property type="entry name" value="Non-specific serine/threonine protein kinase"/>
    <property type="match status" value="1"/>
</dbReference>
<dbReference type="FunFam" id="3.30.200.20:FF:000761">
    <property type="entry name" value="Non-specific serine/threonine protein kinase"/>
    <property type="match status" value="1"/>
</dbReference>
<dbReference type="FunFam" id="3.90.810.10:FF:000005">
    <property type="entry name" value="Non-specific serine/threonine protein kinase"/>
    <property type="match status" value="1"/>
</dbReference>
<dbReference type="Gene3D" id="3.90.810.10">
    <property type="entry name" value="CRIB domain"/>
    <property type="match status" value="1"/>
</dbReference>
<dbReference type="Gene3D" id="3.30.200.20">
    <property type="entry name" value="Phosphorylase Kinase, domain 1"/>
    <property type="match status" value="1"/>
</dbReference>
<dbReference type="Gene3D" id="2.30.29.30">
    <property type="entry name" value="Pleckstrin-homology domain (PH domain)/Phosphotyrosine-binding domain (PTB)"/>
    <property type="match status" value="1"/>
</dbReference>
<dbReference type="Gene3D" id="1.10.510.10">
    <property type="entry name" value="Transferase(Phosphotransferase) domain 1"/>
    <property type="match status" value="1"/>
</dbReference>
<dbReference type="InterPro" id="IPR000095">
    <property type="entry name" value="CRIB_dom"/>
</dbReference>
<dbReference type="InterPro" id="IPR036936">
    <property type="entry name" value="CRIB_dom_sf"/>
</dbReference>
<dbReference type="InterPro" id="IPR011009">
    <property type="entry name" value="Kinase-like_dom_sf"/>
</dbReference>
<dbReference type="InterPro" id="IPR051931">
    <property type="entry name" value="PAK3-like"/>
</dbReference>
<dbReference type="InterPro" id="IPR033923">
    <property type="entry name" value="PAK_BD"/>
</dbReference>
<dbReference type="InterPro" id="IPR011993">
    <property type="entry name" value="PH-like_dom_sf"/>
</dbReference>
<dbReference type="InterPro" id="IPR001849">
    <property type="entry name" value="PH_domain"/>
</dbReference>
<dbReference type="InterPro" id="IPR000719">
    <property type="entry name" value="Prot_kinase_dom"/>
</dbReference>
<dbReference type="InterPro" id="IPR008271">
    <property type="entry name" value="Ser/Thr_kinase_AS"/>
</dbReference>
<dbReference type="PANTHER" id="PTHR45832">
    <property type="entry name" value="SERINE/THREONINE-PROTEIN KINASE SAMKA-RELATED-RELATED"/>
    <property type="match status" value="1"/>
</dbReference>
<dbReference type="PANTHER" id="PTHR45832:SF22">
    <property type="entry name" value="SERINE_THREONINE-PROTEIN KINASE SAMKA-RELATED"/>
    <property type="match status" value="1"/>
</dbReference>
<dbReference type="Pfam" id="PF00786">
    <property type="entry name" value="PBD"/>
    <property type="match status" value="1"/>
</dbReference>
<dbReference type="Pfam" id="PF00169">
    <property type="entry name" value="PH"/>
    <property type="match status" value="1"/>
</dbReference>
<dbReference type="Pfam" id="PF00069">
    <property type="entry name" value="Pkinase"/>
    <property type="match status" value="1"/>
</dbReference>
<dbReference type="SMART" id="SM00285">
    <property type="entry name" value="PBD"/>
    <property type="match status" value="1"/>
</dbReference>
<dbReference type="SMART" id="SM00233">
    <property type="entry name" value="PH"/>
    <property type="match status" value="1"/>
</dbReference>
<dbReference type="SMART" id="SM00220">
    <property type="entry name" value="S_TKc"/>
    <property type="match status" value="1"/>
</dbReference>
<dbReference type="SUPFAM" id="SSF50729">
    <property type="entry name" value="PH domain-like"/>
    <property type="match status" value="1"/>
</dbReference>
<dbReference type="SUPFAM" id="SSF56112">
    <property type="entry name" value="Protein kinase-like (PK-like)"/>
    <property type="match status" value="1"/>
</dbReference>
<dbReference type="PROSITE" id="PS50108">
    <property type="entry name" value="CRIB"/>
    <property type="match status" value="1"/>
</dbReference>
<dbReference type="PROSITE" id="PS50003">
    <property type="entry name" value="PH_DOMAIN"/>
    <property type="match status" value="1"/>
</dbReference>
<dbReference type="PROSITE" id="PS50011">
    <property type="entry name" value="PROTEIN_KINASE_DOM"/>
    <property type="match status" value="1"/>
</dbReference>
<dbReference type="PROSITE" id="PS00108">
    <property type="entry name" value="PROTEIN_KINASE_ST"/>
    <property type="match status" value="1"/>
</dbReference>
<keyword id="KW-0067">ATP-binding</keyword>
<keyword id="KW-0418">Kinase</keyword>
<keyword id="KW-0547">Nucleotide-binding</keyword>
<keyword id="KW-1185">Reference proteome</keyword>
<keyword id="KW-0723">Serine/threonine-protein kinase</keyword>
<keyword id="KW-0808">Transferase</keyword>
<comment type="function">
    <text>May be involved in cellular signaling or cytoskeletal functions. May play a role in morphogenetic control.</text>
</comment>
<comment type="catalytic activity">
    <reaction>
        <text>L-seryl-[protein] + ATP = O-phospho-L-seryl-[protein] + ADP + H(+)</text>
        <dbReference type="Rhea" id="RHEA:17989"/>
        <dbReference type="Rhea" id="RHEA-COMP:9863"/>
        <dbReference type="Rhea" id="RHEA-COMP:11604"/>
        <dbReference type="ChEBI" id="CHEBI:15378"/>
        <dbReference type="ChEBI" id="CHEBI:29999"/>
        <dbReference type="ChEBI" id="CHEBI:30616"/>
        <dbReference type="ChEBI" id="CHEBI:83421"/>
        <dbReference type="ChEBI" id="CHEBI:456216"/>
        <dbReference type="EC" id="2.7.11.1"/>
    </reaction>
</comment>
<comment type="catalytic activity">
    <reaction>
        <text>L-threonyl-[protein] + ATP = O-phospho-L-threonyl-[protein] + ADP + H(+)</text>
        <dbReference type="Rhea" id="RHEA:46608"/>
        <dbReference type="Rhea" id="RHEA-COMP:11060"/>
        <dbReference type="Rhea" id="RHEA-COMP:11605"/>
        <dbReference type="ChEBI" id="CHEBI:15378"/>
        <dbReference type="ChEBI" id="CHEBI:30013"/>
        <dbReference type="ChEBI" id="CHEBI:30616"/>
        <dbReference type="ChEBI" id="CHEBI:61977"/>
        <dbReference type="ChEBI" id="CHEBI:456216"/>
        <dbReference type="EC" id="2.7.11.1"/>
    </reaction>
</comment>
<comment type="miscellaneous">
    <text evidence="6">Present with 238 molecules/cell in log phase SD medium.</text>
</comment>
<comment type="similarity">
    <text evidence="7">Belongs to the protein kinase superfamily. STE Ser/Thr protein kinase family. STE20 subfamily.</text>
</comment>
<sequence>MKGVKKEGWISYKVDGLFSFLWQKRYLVLNDSYLAFYKSDKCNEEPVLSVPLTSITNVSRIQLKQNCFEILRATDQKENISPINSYFYESNSKRSIFISTRTERDLHGWLDAIFAKCPLLSGVSSPTNFTHKVHVGFDPKVGNFVGVPDSWAKLLQTSEITYDDWNRNSKAVIKALQFYEDYNGLDTMQFNDHLNTSLDLKPLKSPTRYIINKRTNSIKRSVSRTLRKGKTDSILPVYQSELKPFPRPSDDDYKFTNIEDNKVREEGRVHVSKESTADSQTKQLGKKEQKVIQSHLRRHDNNSTFRPHRLAPSAPATKNHDSKTKWHKEDLLELKNNDDSNEIIMKMKTVAIDVNPRPYFQLVEKAGQGASGAVYLSKRIKLPQENDPRFLKSHCHRVVGERVAIKQIRLSEQPKKQLIMNELLVMNDSRQENIVNFLEAYIIDDEELWVIMEYMEGGCLTDILDAVARSNTGEHSSPLNENQMAYIVKETCQGLKFLHNKKIIHRDIKSDNILLNSQGLVKITDFGFCVELTEKRSKRATMVGTPYWMAPEIVNQKGYDEKVDVWSLGIMLIEMIEGEPPYLNEDPLKALYLIANNGSPKLRHPESVSKQTKQFLDACLQVNVESRASVRKLLTFEFLSMACSPEQLKVSLKWH</sequence>
<reference key="1">
    <citation type="journal article" date="1997" name="Mol. Microbiol.">
        <title>Characterization of SKM1, a Saccharomyces cerevisiae gene encoding a novel Ste20/PAK-like protein kinase.</title>
        <authorList>
            <person name="Martin H."/>
            <person name="Mendoza A."/>
            <person name="Rodriguez-Pachon J.M."/>
            <person name="Molina M."/>
            <person name="Nombela C."/>
        </authorList>
    </citation>
    <scope>NUCLEOTIDE SEQUENCE [GENOMIC DNA]</scope>
    <source>
        <strain>S288c / GRF88</strain>
    </source>
</reference>
<reference key="2">
    <citation type="journal article" date="1995" name="Yeast">
        <title>Sequence analysis of a 44 kb DNA fragment of yeast chromosome XV including the Ty1-H3 retrotransposon, the suf1(+) frameshift suppressor gene for tRNA-Gly, the yeast transfer RNA-Thr-1a and a delta element.</title>
        <authorList>
            <person name="Vandenbol M."/>
            <person name="Durand P."/>
            <person name="Portetelle D."/>
            <person name="Hilger F."/>
        </authorList>
    </citation>
    <scope>NUCLEOTIDE SEQUENCE [GENOMIC DNA]</scope>
</reference>
<reference key="3">
    <citation type="journal article" date="1997" name="Nature">
        <title>The nucleotide sequence of Saccharomyces cerevisiae chromosome XV.</title>
        <authorList>
            <person name="Dujon B."/>
            <person name="Albermann K."/>
            <person name="Aldea M."/>
            <person name="Alexandraki D."/>
            <person name="Ansorge W."/>
            <person name="Arino J."/>
            <person name="Benes V."/>
            <person name="Bohn C."/>
            <person name="Bolotin-Fukuhara M."/>
            <person name="Bordonne R."/>
            <person name="Boyer J."/>
            <person name="Camasses A."/>
            <person name="Casamayor A."/>
            <person name="Casas C."/>
            <person name="Cheret G."/>
            <person name="Cziepluch C."/>
            <person name="Daignan-Fornier B."/>
            <person name="Dang V.-D."/>
            <person name="de Haan M."/>
            <person name="Delius H."/>
            <person name="Durand P."/>
            <person name="Fairhead C."/>
            <person name="Feldmann H."/>
            <person name="Gaillon L."/>
            <person name="Galisson F."/>
            <person name="Gamo F.-J."/>
            <person name="Gancedo C."/>
            <person name="Goffeau A."/>
            <person name="Goulding S.E."/>
            <person name="Grivell L.A."/>
            <person name="Habbig B."/>
            <person name="Hand N.J."/>
            <person name="Hani J."/>
            <person name="Hattenhorst U."/>
            <person name="Hebling U."/>
            <person name="Hernando Y."/>
            <person name="Herrero E."/>
            <person name="Heumann K."/>
            <person name="Hiesel R."/>
            <person name="Hilger F."/>
            <person name="Hofmann B."/>
            <person name="Hollenberg C.P."/>
            <person name="Hughes B."/>
            <person name="Jauniaux J.-C."/>
            <person name="Kalogeropoulos A."/>
            <person name="Katsoulou C."/>
            <person name="Kordes E."/>
            <person name="Lafuente M.J."/>
            <person name="Landt O."/>
            <person name="Louis E.J."/>
            <person name="Maarse A.C."/>
            <person name="Madania A."/>
            <person name="Mannhaupt G."/>
            <person name="Marck C."/>
            <person name="Martin R.P."/>
            <person name="Mewes H.-W."/>
            <person name="Michaux G."/>
            <person name="Paces V."/>
            <person name="Parle-McDermott A.G."/>
            <person name="Pearson B.M."/>
            <person name="Perrin A."/>
            <person name="Pettersson B."/>
            <person name="Poch O."/>
            <person name="Pohl T.M."/>
            <person name="Poirey R."/>
            <person name="Portetelle D."/>
            <person name="Pujol A."/>
            <person name="Purnelle B."/>
            <person name="Ramezani Rad M."/>
            <person name="Rechmann S."/>
            <person name="Schwager C."/>
            <person name="Schweizer M."/>
            <person name="Sor F."/>
            <person name="Sterky F."/>
            <person name="Tarassov I.A."/>
            <person name="Teodoru C."/>
            <person name="Tettelin H."/>
            <person name="Thierry A."/>
            <person name="Tobiasch E."/>
            <person name="Tzermia M."/>
            <person name="Uhlen M."/>
            <person name="Unseld M."/>
            <person name="Valens M."/>
            <person name="Vandenbol M."/>
            <person name="Vetter I."/>
            <person name="Vlcek C."/>
            <person name="Voet M."/>
            <person name="Volckaert G."/>
            <person name="Voss H."/>
            <person name="Wambutt R."/>
            <person name="Wedler H."/>
            <person name="Wiemann S."/>
            <person name="Winsor B."/>
            <person name="Wolfe K.H."/>
            <person name="Zollner A."/>
            <person name="Zumstein E."/>
            <person name="Kleine K."/>
        </authorList>
    </citation>
    <scope>NUCLEOTIDE SEQUENCE [LARGE SCALE GENOMIC DNA]</scope>
    <source>
        <strain>ATCC 204508 / S288c</strain>
    </source>
</reference>
<reference key="4">
    <citation type="journal article" date="2014" name="G3 (Bethesda)">
        <title>The reference genome sequence of Saccharomyces cerevisiae: Then and now.</title>
        <authorList>
            <person name="Engel S.R."/>
            <person name="Dietrich F.S."/>
            <person name="Fisk D.G."/>
            <person name="Binkley G."/>
            <person name="Balakrishnan R."/>
            <person name="Costanzo M.C."/>
            <person name="Dwight S.S."/>
            <person name="Hitz B.C."/>
            <person name="Karra K."/>
            <person name="Nash R.S."/>
            <person name="Weng S."/>
            <person name="Wong E.D."/>
            <person name="Lloyd P."/>
            <person name="Skrzypek M.S."/>
            <person name="Miyasato S.R."/>
            <person name="Simison M."/>
            <person name="Cherry J.M."/>
        </authorList>
    </citation>
    <scope>GENOME REANNOTATION</scope>
    <source>
        <strain>ATCC 204508 / S288c</strain>
    </source>
</reference>
<reference key="5">
    <citation type="journal article" date="2007" name="Genome Res.">
        <title>Approaching a complete repository of sequence-verified protein-encoding clones for Saccharomyces cerevisiae.</title>
        <authorList>
            <person name="Hu Y."/>
            <person name="Rolfs A."/>
            <person name="Bhullar B."/>
            <person name="Murthy T.V.S."/>
            <person name="Zhu C."/>
            <person name="Berger M.F."/>
            <person name="Camargo A.A."/>
            <person name="Kelley F."/>
            <person name="McCarron S."/>
            <person name="Jepson D."/>
            <person name="Richardson A."/>
            <person name="Raphael J."/>
            <person name="Moreira D."/>
            <person name="Taycher E."/>
            <person name="Zuo D."/>
            <person name="Mohr S."/>
            <person name="Kane M.F."/>
            <person name="Williamson J."/>
            <person name="Simpson A.J.G."/>
            <person name="Bulyk M.L."/>
            <person name="Harlow E."/>
            <person name="Marsischky G."/>
            <person name="Kolodner R.D."/>
            <person name="LaBaer J."/>
        </authorList>
    </citation>
    <scope>NUCLEOTIDE SEQUENCE [GENOMIC DNA]</scope>
    <source>
        <strain>ATCC 204508 / S288c</strain>
    </source>
</reference>
<reference key="6">
    <citation type="journal article" date="2003" name="Nature">
        <title>Global analysis of protein expression in yeast.</title>
        <authorList>
            <person name="Ghaemmaghami S."/>
            <person name="Huh W.-K."/>
            <person name="Bower K."/>
            <person name="Howson R.W."/>
            <person name="Belle A."/>
            <person name="Dephoure N."/>
            <person name="O'Shea E.K."/>
            <person name="Weissman J.S."/>
        </authorList>
    </citation>
    <scope>LEVEL OF PROTEIN EXPRESSION [LARGE SCALE ANALYSIS]</scope>
</reference>